<evidence type="ECO:0000250" key="1">
    <source>
        <dbReference type="UniProtKB" id="Q9C0E2"/>
    </source>
</evidence>
<evidence type="ECO:0000269" key="2">
    <source>
    </source>
</evidence>
<evidence type="ECO:0000269" key="3">
    <source>
    </source>
</evidence>
<evidence type="ECO:0000303" key="4">
    <source>
    </source>
</evidence>
<evidence type="ECO:0000303" key="5">
    <source>
    </source>
</evidence>
<evidence type="ECO:0000303" key="6">
    <source>
    </source>
</evidence>
<evidence type="ECO:0000305" key="7"/>
<evidence type="ECO:0000312" key="8">
    <source>
        <dbReference type="MGI" id="MGI:1888526"/>
    </source>
</evidence>
<evidence type="ECO:0007744" key="9">
    <source>
        <dbReference type="PDB" id="5DLQ"/>
    </source>
</evidence>
<evidence type="ECO:0007744" key="10">
    <source>
    </source>
</evidence>
<evidence type="ECO:0007829" key="11">
    <source>
        <dbReference type="PDB" id="5DLQ"/>
    </source>
</evidence>
<dbReference type="EMBL" id="AF145021">
    <property type="protein sequence ID" value="AAG09133.1"/>
    <property type="molecule type" value="mRNA"/>
</dbReference>
<dbReference type="EMBL" id="AC154504">
    <property type="status" value="NOT_ANNOTATED_CDS"/>
    <property type="molecule type" value="Genomic_DNA"/>
</dbReference>
<dbReference type="EMBL" id="AC154675">
    <property type="status" value="NOT_ANNOTATED_CDS"/>
    <property type="molecule type" value="Genomic_DNA"/>
</dbReference>
<dbReference type="EMBL" id="AK129430">
    <property type="protein sequence ID" value="BAC98240.1"/>
    <property type="molecule type" value="mRNA"/>
</dbReference>
<dbReference type="CCDS" id="CCDS56961.1"/>
<dbReference type="RefSeq" id="NP_065252.1">
    <property type="nucleotide sequence ID" value="NM_020506.1"/>
</dbReference>
<dbReference type="PDB" id="5DLQ">
    <property type="method" value="X-ray"/>
    <property type="resolution" value="3.20 A"/>
    <property type="chains" value="A/B=1-1151"/>
</dbReference>
<dbReference type="PDBsum" id="5DLQ"/>
<dbReference type="SMR" id="Q9ESJ0"/>
<dbReference type="BioGRID" id="208228">
    <property type="interactions" value="4"/>
</dbReference>
<dbReference type="FunCoup" id="Q9ESJ0">
    <property type="interactions" value="4364"/>
</dbReference>
<dbReference type="IntAct" id="Q9ESJ0">
    <property type="interactions" value="2"/>
</dbReference>
<dbReference type="STRING" id="10090.ENSMUSP00000133280"/>
<dbReference type="GlyGen" id="Q9ESJ0">
    <property type="glycosylation" value="2 sites, 1 N-linked glycan (1 site), 1 O-linked glycan (1 site)"/>
</dbReference>
<dbReference type="iPTMnet" id="Q9ESJ0"/>
<dbReference type="PhosphoSitePlus" id="Q9ESJ0"/>
<dbReference type="jPOST" id="Q9ESJ0"/>
<dbReference type="PaxDb" id="10090-ENSMUSP00000133280"/>
<dbReference type="PeptideAtlas" id="Q9ESJ0"/>
<dbReference type="ProteomicsDB" id="299716"/>
<dbReference type="Pumba" id="Q9ESJ0"/>
<dbReference type="Antibodypedia" id="41969">
    <property type="antibodies" value="47 antibodies from 19 providers"/>
</dbReference>
<dbReference type="DNASU" id="57258"/>
<dbReference type="GeneID" id="57258"/>
<dbReference type="KEGG" id="mmu:57258"/>
<dbReference type="UCSC" id="uc007udf.1">
    <property type="organism name" value="mouse"/>
</dbReference>
<dbReference type="AGR" id="MGI:1888526"/>
<dbReference type="CTD" id="64328"/>
<dbReference type="MGI" id="MGI:1888526">
    <property type="gene designation" value="Xpo4"/>
</dbReference>
<dbReference type="VEuPathDB" id="HostDB:ENSMUSG00000021952"/>
<dbReference type="eggNOG" id="KOG4541">
    <property type="taxonomic scope" value="Eukaryota"/>
</dbReference>
<dbReference type="InParanoid" id="Q9ESJ0"/>
<dbReference type="OrthoDB" id="5548448at2759"/>
<dbReference type="TreeFam" id="TF312991"/>
<dbReference type="BioGRID-ORCS" id="57258">
    <property type="hits" value="10 hits in 78 CRISPR screens"/>
</dbReference>
<dbReference type="ChiTaRS" id="Xpo4">
    <property type="organism name" value="mouse"/>
</dbReference>
<dbReference type="PRO" id="PR:Q9ESJ0"/>
<dbReference type="Proteomes" id="UP000000589">
    <property type="component" value="Chromosome 14"/>
</dbReference>
<dbReference type="RNAct" id="Q9ESJ0">
    <property type="molecule type" value="protein"/>
</dbReference>
<dbReference type="Bgee" id="ENSMUSG00000021952">
    <property type="expression patterns" value="Expressed in primitive streak and 234 other cell types or tissues"/>
</dbReference>
<dbReference type="ExpressionAtlas" id="Q9ESJ0">
    <property type="expression patterns" value="baseline and differential"/>
</dbReference>
<dbReference type="GO" id="GO:0005737">
    <property type="term" value="C:cytoplasm"/>
    <property type="evidence" value="ECO:0007669"/>
    <property type="project" value="UniProtKB-SubCell"/>
</dbReference>
<dbReference type="GO" id="GO:0005634">
    <property type="term" value="C:nucleus"/>
    <property type="evidence" value="ECO:0007669"/>
    <property type="project" value="UniProtKB-SubCell"/>
</dbReference>
<dbReference type="GO" id="GO:0005049">
    <property type="term" value="F:nuclear export signal receptor activity"/>
    <property type="evidence" value="ECO:0000250"/>
    <property type="project" value="UniProtKB"/>
</dbReference>
<dbReference type="GO" id="GO:0015031">
    <property type="term" value="P:protein transport"/>
    <property type="evidence" value="ECO:0007669"/>
    <property type="project" value="UniProtKB-KW"/>
</dbReference>
<dbReference type="DisProt" id="DP02593"/>
<dbReference type="FunFam" id="1.25.10.10:FF:000077">
    <property type="entry name" value="Exportin 4"/>
    <property type="match status" value="1"/>
</dbReference>
<dbReference type="FunFam" id="1.25.10.10:FF:000130">
    <property type="entry name" value="Exportin 4"/>
    <property type="match status" value="1"/>
</dbReference>
<dbReference type="Gene3D" id="1.25.10.10">
    <property type="entry name" value="Leucine-rich Repeat Variant"/>
    <property type="match status" value="2"/>
</dbReference>
<dbReference type="InterPro" id="IPR011989">
    <property type="entry name" value="ARM-like"/>
</dbReference>
<dbReference type="InterPro" id="IPR016024">
    <property type="entry name" value="ARM-type_fold"/>
</dbReference>
<dbReference type="InterPro" id="IPR014877">
    <property type="entry name" value="XPO1_C_dom"/>
</dbReference>
<dbReference type="InterPro" id="IPR044189">
    <property type="entry name" value="XPO4/7-like"/>
</dbReference>
<dbReference type="PANTHER" id="PTHR12596">
    <property type="entry name" value="EXPORTIN 4,7-RELATED"/>
    <property type="match status" value="1"/>
</dbReference>
<dbReference type="PANTHER" id="PTHR12596:SF1">
    <property type="entry name" value="EXPORTIN-4"/>
    <property type="match status" value="1"/>
</dbReference>
<dbReference type="Pfam" id="PF08767">
    <property type="entry name" value="CRM1_C"/>
    <property type="match status" value="1"/>
</dbReference>
<dbReference type="SUPFAM" id="SSF48371">
    <property type="entry name" value="ARM repeat"/>
    <property type="match status" value="1"/>
</dbReference>
<accession>Q9ESJ0</accession>
<accession>E9QLH3</accession>
<accession>Q6ZPJ4</accession>
<keyword id="KW-0002">3D-structure</keyword>
<keyword id="KW-0963">Cytoplasm</keyword>
<keyword id="KW-0539">Nucleus</keyword>
<keyword id="KW-0597">Phosphoprotein</keyword>
<keyword id="KW-0653">Protein transport</keyword>
<keyword id="KW-1185">Reference proteome</keyword>
<keyword id="KW-0813">Transport</keyword>
<name>XPO4_MOUSE</name>
<comment type="function">
    <text evidence="1 2 3">Mediates the nuclear export of proteins (cargos), such as EIF5A, SMAD3 and isoform M2 of PKM (PKM2) (By similarity). In the nucleus binds cooperatively to its cargo and to the GTPase Ran in its active GTP-bound form (By similarity). Docking of this trimeric complex to the nuclear pore complex (NPC) is mediated through binding to nucleoporins (By similarity). Upon transit of a nuclear export complex into the cytoplasm, disassembling of the complex and hydrolysis of Ran-GTP to Ran-GDP (induced by RANBP1 and RANGAP1, respectively) cause release of the cargo from the export receptor (By similarity). XPO4 then return to the nuclear compartment and mediate another round of transport (By similarity). The directionality of nuclear export is thought to be conferred by an asymmetric distribution of the GTP- and GDP-bound forms of Ran between the cytoplasm and nucleus (By similarity). Catalyzes the nuclear export of hypusinated EIF5A; a small cytoplasmic protein that enters nucleus and accumulates within nucleolus if not exported back by XPO4 (PubMed:27306458). Specifically mediates nuclear export of isoform M2 of PKM (PKM2) following PKM2 deacetylation by SIRT6 (By similarity). Also mediates the nuclear import of SOX transcription factors SRY and SOX2 (PubMed:19349578).</text>
</comment>
<comment type="subunit">
    <text evidence="3">Interacts with Ran and cargo proteins in a GTP-dependent manner.</text>
</comment>
<comment type="subcellular location">
    <subcellularLocation>
        <location evidence="1">Cytoplasm</location>
    </subcellularLocation>
    <subcellularLocation>
        <location evidence="1">Nucleus</location>
    </subcellularLocation>
    <text evidence="1">Shuttles between the nucleus and the cytoplasm.</text>
</comment>
<comment type="similarity">
    <text evidence="7">Belongs to the exportin family.</text>
</comment>
<sequence length="1151" mass="129979">MMAAALGPPEVIAQLENAAKVLMAPPSMVSNEQRQHAEHIFLSFRKSKSPFAVCRHILETSKVDYVLFQAATAIMEAVVREWVLLEKGSIESLRTFLLTYVLQRPNLQKYVREQILLAVAVIVKRGSLDKSIDCKSIFHEVSQLISSGNPTVQTLACSILTALLSEFSSSSKTSNIGLSMEFHGNCKRVFQEEDLRQIFMLTVGVLQEFSRRENLSAQMSSVFQRYLALANQVLSWNFLPPKLGRHYIAMFESSQNVLLKPTESWREALLDSRVMELFFTVHRKIREDSDMAQDSLQCLAQLASLHGPIFPDEGSQVDYLAHFIEGLLNTINGIEIEDSEAVGISSIISNLITVFPRNVLTAIPSELFSSFVNCLTHLTCSFGRSAALEEVLDKDDMVYMEAYDKLLESWLTLVRDDKHFHKGFFTQHAVQVFNSYIQCHLAAPDGTRNLTANGVASREEEEISELQEDDRDQFSDQLASVGMLGRIAAEHCMPLLTSLLEERVTRLHGQLQRHQQQFLASPGSSTIDNKMLDDLYEDIHWLILVTGYLLADDTQGETPLIPPEIMEYSIKHSSEVDINTTLQILGSPGEKASSIPGYSRTDSVIRLLSAVLRVSEVESRAIRADLTHLLSPQMGKDIVWFLKRWAKTYLLVDEKLYDQISLPLSTAFGADTEGSQWIIGYLLQKVISNLSVWSSEQDLANDTVQLLVTLVERRERANLVIQCENWWNLAKQFASRSPPLNFLSSPVQRTLMKALVLGGFAHMDTETKQQYWTEVLQPLQQRFLRVINQENFQQMCQQEEVKQEITATLEALCGIAEATQIDNVAILFNFLMDFLNNCIGLMEVYKNTPETVNLIIEVFVEVAHKQICYLGESKAMHLYEACLTLLQVYSKNNLGRQRIDVTAEEEQYQDLLLIMELLTNLLSKEFIDFSDTDEVFRGHEPGQAAGRSVSAADVVLYGVNLILPLMSQDLLKFPTLCNQYYKLITFICEIFPEKIPQLPEDLFKSLMYSLELGMTSMSSEVCQLCLEALTPLAEQCAKAQETDSPLFLATRHFLKLVFDMLVLQKHNTEMTTAAGEAFYTLVCLHQAEYSELVETLLSSQQDPVIYQRLADAFNKLTASSTPPALDRKQKMAFLKSLEEFMANVGGLLCVK</sequence>
<proteinExistence type="evidence at protein level"/>
<protein>
    <recommendedName>
        <fullName evidence="4">Exportin-4</fullName>
        <shortName evidence="4">Exp4</shortName>
    </recommendedName>
</protein>
<organism>
    <name type="scientific">Mus musculus</name>
    <name type="common">Mouse</name>
    <dbReference type="NCBI Taxonomy" id="10090"/>
    <lineage>
        <taxon>Eukaryota</taxon>
        <taxon>Metazoa</taxon>
        <taxon>Chordata</taxon>
        <taxon>Craniata</taxon>
        <taxon>Vertebrata</taxon>
        <taxon>Euteleostomi</taxon>
        <taxon>Mammalia</taxon>
        <taxon>Eutheria</taxon>
        <taxon>Euarchontoglires</taxon>
        <taxon>Glires</taxon>
        <taxon>Rodentia</taxon>
        <taxon>Myomorpha</taxon>
        <taxon>Muroidea</taxon>
        <taxon>Muridae</taxon>
        <taxon>Murinae</taxon>
        <taxon>Mus</taxon>
        <taxon>Mus</taxon>
    </lineage>
</organism>
<feature type="chain" id="PRO_0000204712" description="Exportin-4">
    <location>
        <begin position="1"/>
        <end position="1151"/>
    </location>
</feature>
<feature type="modified residue" description="Phosphoserine" evidence="10">
    <location>
        <position position="464"/>
    </location>
</feature>
<feature type="modified residue" description="Phosphoserine" evidence="10">
    <location>
        <position position="521"/>
    </location>
</feature>
<feature type="mutagenesis site" description="Abolished binding to hypusinated EIF5A." evidence="3">
    <original>E</original>
    <variation>R</variation>
    <location>
        <position position="462"/>
    </location>
</feature>
<feature type="mutagenesis site" description="Abolished binding to hypusinated EIF5A." evidence="3">
    <original>E</original>
    <variation>R</variation>
    <location>
        <position position="465"/>
    </location>
</feature>
<feature type="mutagenesis site" description="Abolished binding to and nuclear export of hypusinated EIF5A." evidence="3">
    <original>D</original>
    <variation>N</variation>
    <variation>R</variation>
    <location>
        <position position="470"/>
    </location>
</feature>
<feature type="mutagenesis site" description="Abolished binding to and nuclear export of hypusinated EIF5A." evidence="3">
    <original>E</original>
    <variation>Q</variation>
    <variation>R</variation>
    <location>
        <position position="537"/>
    </location>
</feature>
<feature type="mutagenesis site" description="Abolished binding to and nuclear export of hypusinated EIF5A." evidence="3">
    <original>S</original>
    <variation>A</variation>
    <variation>R</variation>
    <location>
        <position position="631"/>
    </location>
</feature>
<feature type="mutagenesis site" description="Abolished binding to hypusinated EIF5A." evidence="3">
    <original>S</original>
    <variation>R</variation>
    <location>
        <position position="695"/>
    </location>
</feature>
<feature type="sequence conflict" description="In Ref. 1; AAG09133 and 3; BAC98240." evidence="7" ref="1 3">
    <original>K</original>
    <variation>N</variation>
    <location>
        <position position="242"/>
    </location>
</feature>
<feature type="helix" evidence="11">
    <location>
        <begin position="9"/>
        <end position="22"/>
    </location>
</feature>
<feature type="helix" evidence="11">
    <location>
        <begin position="26"/>
        <end position="28"/>
    </location>
</feature>
<feature type="helix" evidence="11">
    <location>
        <begin position="31"/>
        <end position="45"/>
    </location>
</feature>
<feature type="helix" evidence="11">
    <location>
        <begin position="51"/>
        <end position="60"/>
    </location>
</feature>
<feature type="helix" evidence="11">
    <location>
        <begin position="64"/>
        <end position="80"/>
    </location>
</feature>
<feature type="turn" evidence="11">
    <location>
        <begin position="81"/>
        <end position="84"/>
    </location>
</feature>
<feature type="helix" evidence="11">
    <location>
        <begin position="87"/>
        <end position="103"/>
    </location>
</feature>
<feature type="helix" evidence="11">
    <location>
        <begin position="109"/>
        <end position="128"/>
    </location>
</feature>
<feature type="helix" evidence="11">
    <location>
        <begin position="134"/>
        <end position="146"/>
    </location>
</feature>
<feature type="helix" evidence="11">
    <location>
        <begin position="150"/>
        <end position="166"/>
    </location>
</feature>
<feature type="helix" evidence="11">
    <location>
        <begin position="186"/>
        <end position="192"/>
    </location>
</feature>
<feature type="helix" evidence="11">
    <location>
        <begin position="194"/>
        <end position="211"/>
    </location>
</feature>
<feature type="helix" evidence="11">
    <location>
        <begin position="217"/>
        <end position="234"/>
    </location>
</feature>
<feature type="strand" evidence="11">
    <location>
        <begin position="236"/>
        <end position="238"/>
    </location>
</feature>
<feature type="helix" evidence="11">
    <location>
        <begin position="263"/>
        <end position="269"/>
    </location>
</feature>
<feature type="helix" evidence="11">
    <location>
        <begin position="272"/>
        <end position="284"/>
    </location>
</feature>
<feature type="helix" evidence="11">
    <location>
        <begin position="286"/>
        <end position="288"/>
    </location>
</feature>
<feature type="helix" evidence="11">
    <location>
        <begin position="291"/>
        <end position="303"/>
    </location>
</feature>
<feature type="helix" evidence="11">
    <location>
        <begin position="314"/>
        <end position="332"/>
    </location>
</feature>
<feature type="turn" evidence="11">
    <location>
        <begin position="337"/>
        <end position="340"/>
    </location>
</feature>
<feature type="helix" evidence="11">
    <location>
        <begin position="341"/>
        <end position="354"/>
    </location>
</feature>
<feature type="helix" evidence="11">
    <location>
        <begin position="357"/>
        <end position="360"/>
    </location>
</feature>
<feature type="helix" evidence="11">
    <location>
        <begin position="365"/>
        <end position="392"/>
    </location>
</feature>
<feature type="helix" evidence="11">
    <location>
        <begin position="399"/>
        <end position="414"/>
    </location>
</feature>
<feature type="helix" evidence="11">
    <location>
        <begin position="426"/>
        <end position="439"/>
    </location>
</feature>
<feature type="turn" evidence="11">
    <location>
        <begin position="443"/>
        <end position="445"/>
    </location>
</feature>
<feature type="strand" evidence="11">
    <location>
        <begin position="451"/>
        <end position="453"/>
    </location>
</feature>
<feature type="helix" evidence="11">
    <location>
        <begin position="470"/>
        <end position="473"/>
    </location>
</feature>
<feature type="helix" evidence="11">
    <location>
        <begin position="475"/>
        <end position="487"/>
    </location>
</feature>
<feature type="helix" evidence="11">
    <location>
        <begin position="489"/>
        <end position="513"/>
    </location>
</feature>
<feature type="helix" evidence="11">
    <location>
        <begin position="529"/>
        <end position="550"/>
    </location>
</feature>
<feature type="strand" evidence="11">
    <location>
        <begin position="555"/>
        <end position="557"/>
    </location>
</feature>
<feature type="helix" evidence="11">
    <location>
        <begin position="563"/>
        <end position="571"/>
    </location>
</feature>
<feature type="helix" evidence="11">
    <location>
        <begin position="573"/>
        <end position="575"/>
    </location>
</feature>
<feature type="helix" evidence="11">
    <location>
        <begin position="578"/>
        <end position="586"/>
    </location>
</feature>
<feature type="helix" evidence="11">
    <location>
        <begin position="598"/>
        <end position="600"/>
    </location>
</feature>
<feature type="helix" evidence="11">
    <location>
        <begin position="603"/>
        <end position="623"/>
    </location>
</feature>
<feature type="helix" evidence="11">
    <location>
        <begin position="626"/>
        <end position="629"/>
    </location>
</feature>
<feature type="helix" evidence="11">
    <location>
        <begin position="632"/>
        <end position="646"/>
    </location>
</feature>
<feature type="strand" evidence="11">
    <location>
        <begin position="649"/>
        <end position="651"/>
    </location>
</feature>
<feature type="helix" evidence="11">
    <location>
        <begin position="654"/>
        <end position="656"/>
    </location>
</feature>
<feature type="helix" evidence="11">
    <location>
        <begin position="662"/>
        <end position="668"/>
    </location>
</feature>
<feature type="helix" evidence="11">
    <location>
        <begin position="673"/>
        <end position="692"/>
    </location>
</feature>
<feature type="helix" evidence="11">
    <location>
        <begin position="697"/>
        <end position="711"/>
    </location>
</feature>
<feature type="helix" evidence="11">
    <location>
        <begin position="714"/>
        <end position="720"/>
    </location>
</feature>
<feature type="helix" evidence="11">
    <location>
        <begin position="724"/>
        <end position="734"/>
    </location>
</feature>
<feature type="helix" evidence="11">
    <location>
        <begin position="738"/>
        <end position="741"/>
    </location>
</feature>
<feature type="helix" evidence="11">
    <location>
        <begin position="745"/>
        <end position="758"/>
    </location>
</feature>
<feature type="helix" evidence="11">
    <location>
        <begin position="765"/>
        <end position="775"/>
    </location>
</feature>
<feature type="helix" evidence="11">
    <location>
        <begin position="777"/>
        <end position="786"/>
    </location>
</feature>
<feature type="helix" evidence="11">
    <location>
        <begin position="794"/>
        <end position="797"/>
    </location>
</feature>
<feature type="helix" evidence="11">
    <location>
        <begin position="799"/>
        <end position="817"/>
    </location>
</feature>
<feature type="turn" evidence="11">
    <location>
        <begin position="821"/>
        <end position="826"/>
    </location>
</feature>
<feature type="helix" evidence="11">
    <location>
        <begin position="827"/>
        <end position="844"/>
    </location>
</feature>
<feature type="helix" evidence="11">
    <location>
        <begin position="849"/>
        <end position="866"/>
    </location>
</feature>
<feature type="turn" evidence="11">
    <location>
        <begin position="867"/>
        <end position="869"/>
    </location>
</feature>
<feature type="helix" evidence="11">
    <location>
        <begin position="872"/>
        <end position="893"/>
    </location>
</feature>
<feature type="strand" evidence="11">
    <location>
        <begin position="894"/>
        <end position="898"/>
    </location>
</feature>
<feature type="helix" evidence="11">
    <location>
        <begin position="903"/>
        <end position="923"/>
    </location>
</feature>
<feature type="helix" evidence="11">
    <location>
        <begin position="953"/>
        <end position="962"/>
    </location>
</feature>
<feature type="helix" evidence="11">
    <location>
        <begin position="963"/>
        <end position="965"/>
    </location>
</feature>
<feature type="helix" evidence="11">
    <location>
        <begin position="970"/>
        <end position="972"/>
    </location>
</feature>
<feature type="helix" evidence="11">
    <location>
        <begin position="974"/>
        <end position="989"/>
    </location>
</feature>
<feature type="helix" evidence="11">
    <location>
        <begin position="1000"/>
        <end position="1015"/>
    </location>
</feature>
<feature type="helix" evidence="11">
    <location>
        <begin position="1019"/>
        <end position="1029"/>
    </location>
</feature>
<feature type="helix" evidence="11">
    <location>
        <begin position="1030"/>
        <end position="1032"/>
    </location>
</feature>
<feature type="helix" evidence="11">
    <location>
        <begin position="1047"/>
        <end position="1061"/>
    </location>
</feature>
<feature type="helix" evidence="11">
    <location>
        <begin position="1072"/>
        <end position="1084"/>
    </location>
</feature>
<feature type="helix" evidence="11">
    <location>
        <begin position="1086"/>
        <end position="1098"/>
    </location>
</feature>
<feature type="helix" evidence="11">
    <location>
        <begin position="1103"/>
        <end position="1120"/>
    </location>
</feature>
<feature type="helix" evidence="11">
    <location>
        <begin position="1128"/>
        <end position="1144"/>
    </location>
</feature>
<reference key="1">
    <citation type="journal article" date="2000" name="EMBO J.">
        <title>Exportin 4: a mediator of a novel nuclear export pathway in higher eukaryotes.</title>
        <authorList>
            <person name="Lipowsky G."/>
            <person name="Bischoff F.R."/>
            <person name="Schwarzmaier P."/>
            <person name="Kraft R."/>
            <person name="Kostka S."/>
            <person name="Hartmann E."/>
            <person name="Kutay U."/>
            <person name="Goerlich D."/>
        </authorList>
    </citation>
    <scope>NUCLEOTIDE SEQUENCE [MRNA]</scope>
</reference>
<reference key="2">
    <citation type="journal article" date="2009" name="PLoS Biol.">
        <title>Lineage-specific biology revealed by a finished genome assembly of the mouse.</title>
        <authorList>
            <person name="Church D.M."/>
            <person name="Goodstadt L."/>
            <person name="Hillier L.W."/>
            <person name="Zody M.C."/>
            <person name="Goldstein S."/>
            <person name="She X."/>
            <person name="Bult C.J."/>
            <person name="Agarwala R."/>
            <person name="Cherry J.L."/>
            <person name="DiCuccio M."/>
            <person name="Hlavina W."/>
            <person name="Kapustin Y."/>
            <person name="Meric P."/>
            <person name="Maglott D."/>
            <person name="Birtle Z."/>
            <person name="Marques A.C."/>
            <person name="Graves T."/>
            <person name="Zhou S."/>
            <person name="Teague B."/>
            <person name="Potamousis K."/>
            <person name="Churas C."/>
            <person name="Place M."/>
            <person name="Herschleb J."/>
            <person name="Runnheim R."/>
            <person name="Forrest D."/>
            <person name="Amos-Landgraf J."/>
            <person name="Schwartz D.C."/>
            <person name="Cheng Z."/>
            <person name="Lindblad-Toh K."/>
            <person name="Eichler E.E."/>
            <person name="Ponting C.P."/>
        </authorList>
    </citation>
    <scope>NUCLEOTIDE SEQUENCE [LARGE SCALE GENOMIC DNA]</scope>
    <source>
        <strain>C57BL/6J</strain>
    </source>
</reference>
<reference key="3">
    <citation type="journal article" date="2003" name="DNA Res.">
        <title>Prediction of the coding sequences of mouse homologues of KIAA gene: III. The complete nucleotide sequences of 500 mouse KIAA-homologous cDNAs identified by screening of terminal sequences of cDNA clones randomly sampled from size-fractionated libraries.</title>
        <authorList>
            <person name="Okazaki N."/>
            <person name="Kikuno R."/>
            <person name="Ohara R."/>
            <person name="Inamoto S."/>
            <person name="Koseki H."/>
            <person name="Hiraoka S."/>
            <person name="Saga Y."/>
            <person name="Nagase T."/>
            <person name="Ohara O."/>
            <person name="Koga H."/>
        </authorList>
    </citation>
    <scope>NUCLEOTIDE SEQUENCE [LARGE SCALE MRNA] OF 3-1151</scope>
    <source>
        <tissue>Embryonic tail</tissue>
    </source>
</reference>
<reference key="4">
    <citation type="journal article" date="2009" name="J. Cell Biol.">
        <title>Exportin 4 mediates a novel nuclear import pathway for Sox family transcription factors.</title>
        <authorList>
            <person name="Gontan C."/>
            <person name="Guettler T."/>
            <person name="Engelen E."/>
            <person name="Demmers J."/>
            <person name="Fornerod M."/>
            <person name="Grosveld F.G."/>
            <person name="Tibboel D."/>
            <person name="Goerlich D."/>
            <person name="Poot R.A."/>
            <person name="Rottier R.J."/>
        </authorList>
    </citation>
    <scope>FUNCTION</scope>
</reference>
<reference key="5">
    <citation type="journal article" date="2010" name="Cell">
        <title>A tissue-specific atlas of mouse protein phosphorylation and expression.</title>
        <authorList>
            <person name="Huttlin E.L."/>
            <person name="Jedrychowski M.P."/>
            <person name="Elias J.E."/>
            <person name="Goswami T."/>
            <person name="Rad R."/>
            <person name="Beausoleil S.A."/>
            <person name="Villen J."/>
            <person name="Haas W."/>
            <person name="Sowa M.E."/>
            <person name="Gygi S.P."/>
        </authorList>
    </citation>
    <scope>PHOSPHORYLATION [LARGE SCALE ANALYSIS] AT SER-464 AND SER-521</scope>
    <scope>IDENTIFICATION BY MASS SPECTROMETRY [LARGE SCALE ANALYSIS]</scope>
    <source>
        <tissue>Brain</tissue>
        <tissue>Brown adipose tissue</tissue>
        <tissue>Heart</tissue>
        <tissue>Kidney</tissue>
        <tissue>Liver</tissue>
        <tissue>Lung</tissue>
        <tissue>Pancreas</tissue>
        <tissue>Spleen</tissue>
        <tissue>Testis</tissue>
    </source>
</reference>
<reference evidence="9" key="6">
    <citation type="journal article" date="2016" name="Nat. Commun.">
        <title>Structure of the exportin Xpo4 in complex with RanGTP and the hypusine-containing translation factor eIF5A.</title>
        <authorList>
            <person name="Aksu M."/>
            <person name="Trakhanov S."/>
            <person name="Goerlich D."/>
        </authorList>
    </citation>
    <scope>X-RAY CRYSTALLOGRAPHY (3.20 ANGSTROMS) IN COMPLEX WITH EIF5A AND RAN</scope>
    <scope>MUTAGENESIS OF GLU-462; GLU-465; ASP-470; GLU-537; SER-631 AND SER-695</scope>
</reference>
<gene>
    <name evidence="6 8" type="primary">Xpo4</name>
    <name evidence="5" type="synonym">Kiaa1721</name>
</gene>